<proteinExistence type="evidence at protein level"/>
<comment type="function">
    <text evidence="2 4">Dermonecrotic toxins cleave the phosphodiester linkage between the phosphate and headgroup of certain phospholipids (sphingolipid and lysolipid substrates), forming an alcohol (often choline) and a cyclic phosphate (By similarity). This toxin acts on sphingomyelin (SM) (By similarity). It may also act on ceramide phosphoethanolamine (CPE), lysophosphatidylcholine (LPC) and lysophosphatidylethanolamine (LPE), but not on lysophosphatidylserine (LPS), and lysophosphatidylglycerol (LPG) (By similarity). It acts by transphosphatidylation, releasing exclusively cyclic phosphate products as second products (By similarity). Induces dermonecrosis, hemolysis, increased vascular permeability, edema, inflammatory response, and platelet aggregation (By similarity).</text>
</comment>
<comment type="catalytic activity">
    <reaction evidence="2">
        <text>an N-(acyl)-sphingosylphosphocholine = an N-(acyl)-sphingosyl-1,3-cyclic phosphate + choline</text>
        <dbReference type="Rhea" id="RHEA:60652"/>
        <dbReference type="ChEBI" id="CHEBI:15354"/>
        <dbReference type="ChEBI" id="CHEBI:64583"/>
        <dbReference type="ChEBI" id="CHEBI:143892"/>
    </reaction>
</comment>
<comment type="catalytic activity">
    <reaction evidence="2">
        <text>an N-(acyl)-sphingosylphosphoethanolamine = an N-(acyl)-sphingosyl-1,3-cyclic phosphate + ethanolamine</text>
        <dbReference type="Rhea" id="RHEA:60648"/>
        <dbReference type="ChEBI" id="CHEBI:57603"/>
        <dbReference type="ChEBI" id="CHEBI:143891"/>
        <dbReference type="ChEBI" id="CHEBI:143892"/>
    </reaction>
</comment>
<comment type="catalytic activity">
    <reaction evidence="2">
        <text>a 1-acyl-sn-glycero-3-phosphocholine = a 1-acyl-sn-glycero-2,3-cyclic phosphate + choline</text>
        <dbReference type="Rhea" id="RHEA:60700"/>
        <dbReference type="ChEBI" id="CHEBI:15354"/>
        <dbReference type="ChEBI" id="CHEBI:58168"/>
        <dbReference type="ChEBI" id="CHEBI:143947"/>
    </reaction>
</comment>
<comment type="catalytic activity">
    <reaction evidence="2">
        <text>a 1-acyl-sn-glycero-3-phosphoethanolamine = a 1-acyl-sn-glycero-2,3-cyclic phosphate + ethanolamine</text>
        <dbReference type="Rhea" id="RHEA:60704"/>
        <dbReference type="ChEBI" id="CHEBI:57603"/>
        <dbReference type="ChEBI" id="CHEBI:64381"/>
        <dbReference type="ChEBI" id="CHEBI:143947"/>
    </reaction>
</comment>
<comment type="cofactor">
    <cofactor evidence="6">
        <name>Mg(2+)</name>
        <dbReference type="ChEBI" id="CHEBI:18420"/>
    </cofactor>
    <text evidence="6">Binds 1 Mg(2+) ion per subunit.</text>
</comment>
<comment type="subcellular location">
    <subcellularLocation>
        <location evidence="7">Secreted</location>
    </subcellularLocation>
</comment>
<comment type="tissue specificity">
    <text evidence="9">Expressed by the venom gland.</text>
</comment>
<comment type="PTM">
    <text evidence="1">Contains 2 disulfide bonds.</text>
</comment>
<comment type="similarity">
    <text evidence="8">Belongs to the arthropod phospholipase D family. Class II subfamily.</text>
</comment>
<comment type="caution">
    <text evidence="2 3 5">The most common activity assay for dermonecrotic toxins detects enzymatic activity by monitoring choline release from substrate. Liberation of choline from sphingomyelin (SM) or lysophosphatidylcholine (LPC) is commonly assumed to result from substrate hydrolysis, giving either ceramide-1-phosphate (C1P) or lysophosphatidic acid (LPA), respectively, as a second product. However, two studies from Lajoie and colleagues (2013 and 2015) report the observation of exclusive formation of cyclic phosphate products as second products, resulting from intramolecular transphosphatidylation. Cyclic phosphates have vastly different biological properties from their monoester counterparts, and they may be relevant to the pathology of brown spider envenomation.</text>
</comment>
<protein>
    <recommendedName>
        <fullName>Dermonecrotic toxin LgSicTox-beta-LOXN4</fullName>
        <ecNumber evidence="5">4.6.1.-</ecNumber>
    </recommendedName>
    <alternativeName>
        <fullName>Phospholipase D</fullName>
        <shortName>PLD</shortName>
    </alternativeName>
    <alternativeName>
        <fullName>Sphingomyelin phosphodiesterase D</fullName>
        <shortName>SMD</shortName>
        <shortName>SMase D</shortName>
        <shortName>Sphingomyelinase D</shortName>
    </alternativeName>
</protein>
<accession>P0C2K6</accession>
<organism>
    <name type="scientific">Loxosceles gaucho</name>
    <name type="common">Spider</name>
    <dbReference type="NCBI Taxonomy" id="58216"/>
    <lineage>
        <taxon>Eukaryota</taxon>
        <taxon>Metazoa</taxon>
        <taxon>Ecdysozoa</taxon>
        <taxon>Arthropoda</taxon>
        <taxon>Chelicerata</taxon>
        <taxon>Arachnida</taxon>
        <taxon>Araneae</taxon>
        <taxon>Araneomorphae</taxon>
        <taxon>Haplogynae</taxon>
        <taxon>Scytodoidea</taxon>
        <taxon>Sicariidae</taxon>
        <taxon>Loxosceles</taxon>
    </lineage>
</organism>
<sequence length="35" mass="4021">ADSRKPDDRYDMSGNDALGDVKLATYEDNPWETFK</sequence>
<name>BX4_LOXGA</name>
<evidence type="ECO:0000250" key="1"/>
<evidence type="ECO:0000250" key="2">
    <source>
        <dbReference type="UniProtKB" id="A0A0D4WTV1"/>
    </source>
</evidence>
<evidence type="ECO:0000250" key="3">
    <source>
        <dbReference type="UniProtKB" id="A0A0D4WV12"/>
    </source>
</evidence>
<evidence type="ECO:0000250" key="4">
    <source>
        <dbReference type="UniProtKB" id="P0CE80"/>
    </source>
</evidence>
<evidence type="ECO:0000250" key="5">
    <source>
        <dbReference type="UniProtKB" id="Q4ZFU2"/>
    </source>
</evidence>
<evidence type="ECO:0000250" key="6">
    <source>
        <dbReference type="UniProtKB" id="Q8I914"/>
    </source>
</evidence>
<evidence type="ECO:0000269" key="7">
    <source>
    </source>
</evidence>
<evidence type="ECO:0000305" key="8"/>
<evidence type="ECO:0000305" key="9">
    <source>
    </source>
</evidence>
<keyword id="KW-0204">Cytolysis</keyword>
<keyword id="KW-1061">Dermonecrotic toxin</keyword>
<keyword id="KW-0903">Direct protein sequencing</keyword>
<keyword id="KW-1015">Disulfide bond</keyword>
<keyword id="KW-0354">Hemolysis</keyword>
<keyword id="KW-0442">Lipid degradation</keyword>
<keyword id="KW-0443">Lipid metabolism</keyword>
<keyword id="KW-0456">Lyase</keyword>
<keyword id="KW-0460">Magnesium</keyword>
<keyword id="KW-0479">Metal-binding</keyword>
<keyword id="KW-0964">Secreted</keyword>
<keyword id="KW-0800">Toxin</keyword>
<feature type="chain" id="PRO_0000279563" description="Dermonecrotic toxin LgSicTox-beta-LOXN4">
    <location>
        <begin position="1"/>
        <end position="35" status="greater than"/>
    </location>
</feature>
<feature type="binding site" evidence="1">
    <location>
        <position position="20"/>
    </location>
    <ligand>
        <name>Mg(2+)</name>
        <dbReference type="ChEBI" id="CHEBI:18420"/>
    </ligand>
</feature>
<feature type="non-consecutive residues" evidence="8">
    <location>
        <begin position="8"/>
        <end position="9"/>
    </location>
</feature>
<feature type="non-consecutive residues" evidence="8">
    <location>
        <begin position="22"/>
        <end position="23"/>
    </location>
</feature>
<feature type="non-terminal residue">
    <location>
        <position position="35"/>
    </location>
</feature>
<dbReference type="EC" id="4.6.1.-" evidence="5"/>
<dbReference type="ArachnoServer" id="AS000153">
    <property type="toxin name" value="Sphingomyelinase D (LOXN4) (N-terminal fragment)"/>
</dbReference>
<dbReference type="GO" id="GO:0005576">
    <property type="term" value="C:extracellular region"/>
    <property type="evidence" value="ECO:0007669"/>
    <property type="project" value="UniProtKB-SubCell"/>
</dbReference>
<dbReference type="GO" id="GO:0016829">
    <property type="term" value="F:lyase activity"/>
    <property type="evidence" value="ECO:0007669"/>
    <property type="project" value="UniProtKB-KW"/>
</dbReference>
<dbReference type="GO" id="GO:0046872">
    <property type="term" value="F:metal ion binding"/>
    <property type="evidence" value="ECO:0007669"/>
    <property type="project" value="UniProtKB-KW"/>
</dbReference>
<dbReference type="GO" id="GO:0090729">
    <property type="term" value="F:toxin activity"/>
    <property type="evidence" value="ECO:0007669"/>
    <property type="project" value="UniProtKB-KW"/>
</dbReference>
<dbReference type="GO" id="GO:0031640">
    <property type="term" value="P:killing of cells of another organism"/>
    <property type="evidence" value="ECO:0007669"/>
    <property type="project" value="UniProtKB-KW"/>
</dbReference>
<dbReference type="GO" id="GO:0016042">
    <property type="term" value="P:lipid catabolic process"/>
    <property type="evidence" value="ECO:0007669"/>
    <property type="project" value="UniProtKB-KW"/>
</dbReference>
<reference key="1">
    <citation type="journal article" date="2005" name="Proteomics">
        <title>Proteome analysis of brown spider venom: identification of loxnecrogin isoforms in Loxosceles gaucho venom.</title>
        <authorList>
            <person name="Machado L.F."/>
            <person name="Laugesen S."/>
            <person name="Botelho E.D."/>
            <person name="Ricart C.A.O."/>
            <person name="Fontes W."/>
            <person name="Barbaro K.C."/>
            <person name="Roepstorff P."/>
            <person name="Sousa M.V."/>
        </authorList>
    </citation>
    <scope>PROTEIN SEQUENCE</scope>
    <scope>SUBCELLULAR LOCATION</scope>
    <source>
        <tissue>Venom</tissue>
    </source>
</reference>